<gene>
    <name evidence="1" type="primary">rpmI</name>
    <name type="ordered locus">Pmen_1978</name>
</gene>
<evidence type="ECO:0000255" key="1">
    <source>
        <dbReference type="HAMAP-Rule" id="MF_00514"/>
    </source>
</evidence>
<evidence type="ECO:0000305" key="2"/>
<proteinExistence type="inferred from homology"/>
<dbReference type="EMBL" id="CP000680">
    <property type="protein sequence ID" value="ABP84739.1"/>
    <property type="molecule type" value="Genomic_DNA"/>
</dbReference>
<dbReference type="SMR" id="A4XTS3"/>
<dbReference type="STRING" id="399739.Pmen_1978"/>
<dbReference type="KEGG" id="pmy:Pmen_1978"/>
<dbReference type="PATRIC" id="fig|399739.8.peg.2004"/>
<dbReference type="eggNOG" id="COG0291">
    <property type="taxonomic scope" value="Bacteria"/>
</dbReference>
<dbReference type="HOGENOM" id="CLU_169643_1_1_6"/>
<dbReference type="OrthoDB" id="47476at2"/>
<dbReference type="GO" id="GO:0022625">
    <property type="term" value="C:cytosolic large ribosomal subunit"/>
    <property type="evidence" value="ECO:0007669"/>
    <property type="project" value="TreeGrafter"/>
</dbReference>
<dbReference type="GO" id="GO:0003735">
    <property type="term" value="F:structural constituent of ribosome"/>
    <property type="evidence" value="ECO:0007669"/>
    <property type="project" value="InterPro"/>
</dbReference>
<dbReference type="GO" id="GO:0006412">
    <property type="term" value="P:translation"/>
    <property type="evidence" value="ECO:0007669"/>
    <property type="project" value="UniProtKB-UniRule"/>
</dbReference>
<dbReference type="FunFam" id="4.10.410.60:FF:000001">
    <property type="entry name" value="50S ribosomal protein L35"/>
    <property type="match status" value="1"/>
</dbReference>
<dbReference type="Gene3D" id="4.10.410.60">
    <property type="match status" value="1"/>
</dbReference>
<dbReference type="HAMAP" id="MF_00514">
    <property type="entry name" value="Ribosomal_bL35"/>
    <property type="match status" value="1"/>
</dbReference>
<dbReference type="InterPro" id="IPR001706">
    <property type="entry name" value="Ribosomal_bL35"/>
</dbReference>
<dbReference type="InterPro" id="IPR021137">
    <property type="entry name" value="Ribosomal_bL35-like"/>
</dbReference>
<dbReference type="InterPro" id="IPR018265">
    <property type="entry name" value="Ribosomal_bL35_CS"/>
</dbReference>
<dbReference type="InterPro" id="IPR037229">
    <property type="entry name" value="Ribosomal_bL35_sf"/>
</dbReference>
<dbReference type="NCBIfam" id="TIGR00001">
    <property type="entry name" value="rpmI_bact"/>
    <property type="match status" value="1"/>
</dbReference>
<dbReference type="PANTHER" id="PTHR33343">
    <property type="entry name" value="54S RIBOSOMAL PROTEIN BL35M"/>
    <property type="match status" value="1"/>
</dbReference>
<dbReference type="PANTHER" id="PTHR33343:SF1">
    <property type="entry name" value="LARGE RIBOSOMAL SUBUNIT PROTEIN BL35M"/>
    <property type="match status" value="1"/>
</dbReference>
<dbReference type="Pfam" id="PF01632">
    <property type="entry name" value="Ribosomal_L35p"/>
    <property type="match status" value="1"/>
</dbReference>
<dbReference type="PRINTS" id="PR00064">
    <property type="entry name" value="RIBOSOMALL35"/>
</dbReference>
<dbReference type="SUPFAM" id="SSF143034">
    <property type="entry name" value="L35p-like"/>
    <property type="match status" value="1"/>
</dbReference>
<dbReference type="PROSITE" id="PS00936">
    <property type="entry name" value="RIBOSOMAL_L35"/>
    <property type="match status" value="1"/>
</dbReference>
<feature type="chain" id="PRO_1000050747" description="Large ribosomal subunit protein bL35">
    <location>
        <begin position="1"/>
        <end position="64"/>
    </location>
</feature>
<accession>A4XTS3</accession>
<comment type="similarity">
    <text evidence="1">Belongs to the bacterial ribosomal protein bL35 family.</text>
</comment>
<keyword id="KW-0687">Ribonucleoprotein</keyword>
<keyword id="KW-0689">Ribosomal protein</keyword>
<reference key="1">
    <citation type="submission" date="2007-04" db="EMBL/GenBank/DDBJ databases">
        <title>Complete sequence of Pseudomonas mendocina ymp.</title>
        <authorList>
            <consortium name="US DOE Joint Genome Institute"/>
            <person name="Copeland A."/>
            <person name="Lucas S."/>
            <person name="Lapidus A."/>
            <person name="Barry K."/>
            <person name="Glavina del Rio T."/>
            <person name="Dalin E."/>
            <person name="Tice H."/>
            <person name="Pitluck S."/>
            <person name="Kiss H."/>
            <person name="Brettin T."/>
            <person name="Detter J.C."/>
            <person name="Bruce D."/>
            <person name="Han C."/>
            <person name="Schmutz J."/>
            <person name="Larimer F."/>
            <person name="Land M."/>
            <person name="Hauser L."/>
            <person name="Kyrpides N."/>
            <person name="Mikhailova N."/>
            <person name="Hersman L."/>
            <person name="Dubois J."/>
            <person name="Maurice P."/>
            <person name="Richardson P."/>
        </authorList>
    </citation>
    <scope>NUCLEOTIDE SEQUENCE [LARGE SCALE GENOMIC DNA]</scope>
    <source>
        <strain>ymp</strain>
    </source>
</reference>
<name>RL35_ECTM1</name>
<organism>
    <name type="scientific">Ectopseudomonas mendocina (strain ymp)</name>
    <name type="common">Pseudomonas mendocina</name>
    <dbReference type="NCBI Taxonomy" id="399739"/>
    <lineage>
        <taxon>Bacteria</taxon>
        <taxon>Pseudomonadati</taxon>
        <taxon>Pseudomonadota</taxon>
        <taxon>Gammaproteobacteria</taxon>
        <taxon>Pseudomonadales</taxon>
        <taxon>Pseudomonadaceae</taxon>
        <taxon>Ectopseudomonas</taxon>
    </lineage>
</organism>
<protein>
    <recommendedName>
        <fullName evidence="1">Large ribosomal subunit protein bL35</fullName>
    </recommendedName>
    <alternativeName>
        <fullName evidence="2">50S ribosomal protein L35</fullName>
    </alternativeName>
</protein>
<sequence>MPKMKTKSGAAKRFLKTASGYKHKHAFKSHILTKMSTKRKRQLRGSSLIGPSDVAKVERMLRVR</sequence>